<comment type="function">
    <text evidence="1">Transfers the 4'-phosphopantetheine moiety from coenzyme A to a Ser of acyl-carrier-protein.</text>
</comment>
<comment type="catalytic activity">
    <reaction evidence="1">
        <text>apo-[ACP] + CoA = holo-[ACP] + adenosine 3',5'-bisphosphate + H(+)</text>
        <dbReference type="Rhea" id="RHEA:12068"/>
        <dbReference type="Rhea" id="RHEA-COMP:9685"/>
        <dbReference type="Rhea" id="RHEA-COMP:9690"/>
        <dbReference type="ChEBI" id="CHEBI:15378"/>
        <dbReference type="ChEBI" id="CHEBI:29999"/>
        <dbReference type="ChEBI" id="CHEBI:57287"/>
        <dbReference type="ChEBI" id="CHEBI:58343"/>
        <dbReference type="ChEBI" id="CHEBI:64479"/>
        <dbReference type="EC" id="2.7.8.7"/>
    </reaction>
</comment>
<comment type="cofactor">
    <cofactor evidence="1">
        <name>Mg(2+)</name>
        <dbReference type="ChEBI" id="CHEBI:18420"/>
    </cofactor>
</comment>
<comment type="subcellular location">
    <subcellularLocation>
        <location evidence="1">Cytoplasm</location>
    </subcellularLocation>
</comment>
<comment type="similarity">
    <text evidence="1">Belongs to the P-Pant transferase superfamily. AcpS family.</text>
</comment>
<feature type="chain" id="PRO_0000175623" description="Holo-[acyl-carrier-protein] synthase">
    <location>
        <begin position="1"/>
        <end position="128"/>
    </location>
</feature>
<feature type="binding site" evidence="1">
    <location>
        <position position="9"/>
    </location>
    <ligand>
        <name>Mg(2+)</name>
        <dbReference type="ChEBI" id="CHEBI:18420"/>
    </ligand>
</feature>
<feature type="binding site" evidence="1">
    <location>
        <position position="60"/>
    </location>
    <ligand>
        <name>Mg(2+)</name>
        <dbReference type="ChEBI" id="CHEBI:18420"/>
    </ligand>
</feature>
<gene>
    <name evidence="1" type="primary">acpS</name>
    <name type="ordered locus">bbp_237</name>
</gene>
<accession>P59475</accession>
<name>ACPS_BUCBP</name>
<evidence type="ECO:0000255" key="1">
    <source>
        <dbReference type="HAMAP-Rule" id="MF_00101"/>
    </source>
</evidence>
<protein>
    <recommendedName>
        <fullName evidence="1">Holo-[acyl-carrier-protein] synthase</fullName>
        <shortName evidence="1">Holo-ACP synthase</shortName>
        <ecNumber evidence="1">2.7.8.7</ecNumber>
    </recommendedName>
    <alternativeName>
        <fullName evidence="1">4'-phosphopantetheinyl transferase AcpS</fullName>
    </alternativeName>
</protein>
<dbReference type="EC" id="2.7.8.7" evidence="1"/>
<dbReference type="EMBL" id="AE016826">
    <property type="protein sequence ID" value="AAO26964.1"/>
    <property type="molecule type" value="Genomic_DNA"/>
</dbReference>
<dbReference type="RefSeq" id="WP_011091365.1">
    <property type="nucleotide sequence ID" value="NC_004545.1"/>
</dbReference>
<dbReference type="SMR" id="P59475"/>
<dbReference type="STRING" id="224915.bbp_237"/>
<dbReference type="KEGG" id="bab:bbp_237"/>
<dbReference type="eggNOG" id="COG0736">
    <property type="taxonomic scope" value="Bacteria"/>
</dbReference>
<dbReference type="HOGENOM" id="CLU_089696_3_1_6"/>
<dbReference type="OrthoDB" id="517356at2"/>
<dbReference type="Proteomes" id="UP000000601">
    <property type="component" value="Chromosome"/>
</dbReference>
<dbReference type="GO" id="GO:0005737">
    <property type="term" value="C:cytoplasm"/>
    <property type="evidence" value="ECO:0007669"/>
    <property type="project" value="UniProtKB-SubCell"/>
</dbReference>
<dbReference type="GO" id="GO:0008897">
    <property type="term" value="F:holo-[acyl-carrier-protein] synthase activity"/>
    <property type="evidence" value="ECO:0007669"/>
    <property type="project" value="UniProtKB-UniRule"/>
</dbReference>
<dbReference type="GO" id="GO:0000287">
    <property type="term" value="F:magnesium ion binding"/>
    <property type="evidence" value="ECO:0007669"/>
    <property type="project" value="UniProtKB-UniRule"/>
</dbReference>
<dbReference type="GO" id="GO:0006633">
    <property type="term" value="P:fatty acid biosynthetic process"/>
    <property type="evidence" value="ECO:0007669"/>
    <property type="project" value="UniProtKB-UniRule"/>
</dbReference>
<dbReference type="FunFam" id="3.90.470.20:FF:000001">
    <property type="entry name" value="Holo-[acyl-carrier-protein] synthase"/>
    <property type="match status" value="1"/>
</dbReference>
<dbReference type="Gene3D" id="3.90.470.20">
    <property type="entry name" value="4'-phosphopantetheinyl transferase domain"/>
    <property type="match status" value="1"/>
</dbReference>
<dbReference type="HAMAP" id="MF_00101">
    <property type="entry name" value="AcpS"/>
    <property type="match status" value="1"/>
</dbReference>
<dbReference type="InterPro" id="IPR008278">
    <property type="entry name" value="4-PPantetheinyl_Trfase_dom"/>
</dbReference>
<dbReference type="InterPro" id="IPR037143">
    <property type="entry name" value="4-PPantetheinyl_Trfase_dom_sf"/>
</dbReference>
<dbReference type="InterPro" id="IPR002582">
    <property type="entry name" value="ACPS"/>
</dbReference>
<dbReference type="InterPro" id="IPR004568">
    <property type="entry name" value="Ppantetheine-prot_Trfase_dom"/>
</dbReference>
<dbReference type="NCBIfam" id="TIGR00516">
    <property type="entry name" value="acpS"/>
    <property type="match status" value="1"/>
</dbReference>
<dbReference type="NCBIfam" id="TIGR00556">
    <property type="entry name" value="pantethn_trn"/>
    <property type="match status" value="1"/>
</dbReference>
<dbReference type="Pfam" id="PF01648">
    <property type="entry name" value="ACPS"/>
    <property type="match status" value="1"/>
</dbReference>
<dbReference type="SUPFAM" id="SSF56214">
    <property type="entry name" value="4'-phosphopantetheinyl transferase"/>
    <property type="match status" value="1"/>
</dbReference>
<reference key="1">
    <citation type="journal article" date="2003" name="Proc. Natl. Acad. Sci. U.S.A.">
        <title>Reductive genome evolution in Buchnera aphidicola.</title>
        <authorList>
            <person name="van Ham R.C.H.J."/>
            <person name="Kamerbeek J."/>
            <person name="Palacios C."/>
            <person name="Rausell C."/>
            <person name="Abascal F."/>
            <person name="Bastolla U."/>
            <person name="Fernandez J.M."/>
            <person name="Jimenez L."/>
            <person name="Postigo M."/>
            <person name="Silva F.J."/>
            <person name="Tamames J."/>
            <person name="Viguera E."/>
            <person name="Latorre A."/>
            <person name="Valencia A."/>
            <person name="Moran F."/>
            <person name="Moya A."/>
        </authorList>
    </citation>
    <scope>NUCLEOTIDE SEQUENCE [LARGE SCALE GENOMIC DNA]</scope>
    <source>
        <strain>Bp</strain>
    </source>
</reference>
<keyword id="KW-0963">Cytoplasm</keyword>
<keyword id="KW-0275">Fatty acid biosynthesis</keyword>
<keyword id="KW-0276">Fatty acid metabolism</keyword>
<keyword id="KW-0444">Lipid biosynthesis</keyword>
<keyword id="KW-0443">Lipid metabolism</keyword>
<keyword id="KW-0460">Magnesium</keyword>
<keyword id="KW-0479">Metal-binding</keyword>
<keyword id="KW-1185">Reference proteome</keyword>
<keyword id="KW-0808">Transferase</keyword>
<organism>
    <name type="scientific">Buchnera aphidicola subsp. Baizongia pistaciae (strain Bp)</name>
    <dbReference type="NCBI Taxonomy" id="224915"/>
    <lineage>
        <taxon>Bacteria</taxon>
        <taxon>Pseudomonadati</taxon>
        <taxon>Pseudomonadota</taxon>
        <taxon>Gammaproteobacteria</taxon>
        <taxon>Enterobacterales</taxon>
        <taxon>Erwiniaceae</taxon>
        <taxon>Buchnera</taxon>
    </lineage>
</organism>
<sequence length="128" mass="14502">MSILGVGIDILSILRIKRIIKNKLGTKFSQKILSNYELNILPNCKQNYTKFLANRFSVKEAASKALGTGIRNGLKFSDLELHHDKNGKPYLKFLKQAKKMLQAMNTKSTHVSLSDEKLYVCAIVIFED</sequence>
<proteinExistence type="inferred from homology"/>